<accession>A3D187</accession>
<protein>
    <recommendedName>
        <fullName evidence="1">Protein ApaG</fullName>
    </recommendedName>
</protein>
<evidence type="ECO:0000255" key="1">
    <source>
        <dbReference type="HAMAP-Rule" id="MF_00791"/>
    </source>
</evidence>
<gene>
    <name evidence="1" type="primary">apaG</name>
    <name type="ordered locus">Sbal_0976</name>
</gene>
<organism>
    <name type="scientific">Shewanella baltica (strain OS155 / ATCC BAA-1091)</name>
    <dbReference type="NCBI Taxonomy" id="325240"/>
    <lineage>
        <taxon>Bacteria</taxon>
        <taxon>Pseudomonadati</taxon>
        <taxon>Pseudomonadota</taxon>
        <taxon>Gammaproteobacteria</taxon>
        <taxon>Alteromonadales</taxon>
        <taxon>Shewanellaceae</taxon>
        <taxon>Shewanella</taxon>
    </lineage>
</organism>
<name>APAG_SHEB5</name>
<sequence length="126" mass="13777">MSALDTSIRVEVKTEYIEQQSSPEDEKYLFSYTITIINLGEQAAKLETRHWIITDANGNTSEVQGAGVVGETPTIAPNTAYQYTSGTVLDTPLGIMHGTYGMVSESGEHFQATIRPFRLATPGLLH</sequence>
<dbReference type="EMBL" id="CP000563">
    <property type="protein sequence ID" value="ABN60500.1"/>
    <property type="molecule type" value="Genomic_DNA"/>
</dbReference>
<dbReference type="RefSeq" id="WP_006080538.1">
    <property type="nucleotide sequence ID" value="NC_009052.1"/>
</dbReference>
<dbReference type="SMR" id="A3D187"/>
<dbReference type="STRING" id="325240.Sbal_0976"/>
<dbReference type="KEGG" id="sbl:Sbal_0976"/>
<dbReference type="HOGENOM" id="CLU_128074_0_0_6"/>
<dbReference type="OrthoDB" id="9795226at2"/>
<dbReference type="Proteomes" id="UP000001557">
    <property type="component" value="Chromosome"/>
</dbReference>
<dbReference type="GO" id="GO:0070987">
    <property type="term" value="P:error-free translesion synthesis"/>
    <property type="evidence" value="ECO:0007669"/>
    <property type="project" value="TreeGrafter"/>
</dbReference>
<dbReference type="Gene3D" id="2.60.40.1470">
    <property type="entry name" value="ApaG domain"/>
    <property type="match status" value="1"/>
</dbReference>
<dbReference type="HAMAP" id="MF_00791">
    <property type="entry name" value="ApaG"/>
    <property type="match status" value="1"/>
</dbReference>
<dbReference type="InterPro" id="IPR007474">
    <property type="entry name" value="ApaG_domain"/>
</dbReference>
<dbReference type="InterPro" id="IPR036767">
    <property type="entry name" value="ApaG_sf"/>
</dbReference>
<dbReference type="InterPro" id="IPR023065">
    <property type="entry name" value="Uncharacterised_ApaG"/>
</dbReference>
<dbReference type="NCBIfam" id="NF003967">
    <property type="entry name" value="PRK05461.1"/>
    <property type="match status" value="1"/>
</dbReference>
<dbReference type="PANTHER" id="PTHR14289">
    <property type="entry name" value="F-BOX ONLY PROTEIN 3"/>
    <property type="match status" value="1"/>
</dbReference>
<dbReference type="PANTHER" id="PTHR14289:SF16">
    <property type="entry name" value="POLYMERASE DELTA-INTERACTING PROTEIN 2"/>
    <property type="match status" value="1"/>
</dbReference>
<dbReference type="Pfam" id="PF04379">
    <property type="entry name" value="DUF525"/>
    <property type="match status" value="1"/>
</dbReference>
<dbReference type="SUPFAM" id="SSF110069">
    <property type="entry name" value="ApaG-like"/>
    <property type="match status" value="1"/>
</dbReference>
<dbReference type="PROSITE" id="PS51087">
    <property type="entry name" value="APAG"/>
    <property type="match status" value="1"/>
</dbReference>
<feature type="chain" id="PRO_1000083645" description="Protein ApaG">
    <location>
        <begin position="1"/>
        <end position="126"/>
    </location>
</feature>
<feature type="domain" description="ApaG" evidence="1">
    <location>
        <begin position="2"/>
        <end position="126"/>
    </location>
</feature>
<reference key="1">
    <citation type="submission" date="2007-02" db="EMBL/GenBank/DDBJ databases">
        <title>Complete sequence of chromosome of Shewanella baltica OS155.</title>
        <authorList>
            <consortium name="US DOE Joint Genome Institute"/>
            <person name="Copeland A."/>
            <person name="Lucas S."/>
            <person name="Lapidus A."/>
            <person name="Barry K."/>
            <person name="Detter J.C."/>
            <person name="Glavina del Rio T."/>
            <person name="Hammon N."/>
            <person name="Israni S."/>
            <person name="Dalin E."/>
            <person name="Tice H."/>
            <person name="Pitluck S."/>
            <person name="Sims D.R."/>
            <person name="Brettin T."/>
            <person name="Bruce D."/>
            <person name="Han C."/>
            <person name="Tapia R."/>
            <person name="Brainard J."/>
            <person name="Schmutz J."/>
            <person name="Larimer F."/>
            <person name="Land M."/>
            <person name="Hauser L."/>
            <person name="Kyrpides N."/>
            <person name="Mikhailova N."/>
            <person name="Brettar I."/>
            <person name="Klappenbach J."/>
            <person name="Konstantinidis K."/>
            <person name="Rodrigues J."/>
            <person name="Tiedje J."/>
            <person name="Richardson P."/>
        </authorList>
    </citation>
    <scope>NUCLEOTIDE SEQUENCE [LARGE SCALE GENOMIC DNA]</scope>
    <source>
        <strain>OS155 / ATCC BAA-1091</strain>
    </source>
</reference>
<proteinExistence type="inferred from homology"/>
<keyword id="KW-1185">Reference proteome</keyword>